<organism>
    <name type="scientific">Pseudomonas putida (strain ATCC 700007 / DSM 6899 / JCM 31910 / BCRC 17059 / LMG 24140 / F1)</name>
    <dbReference type="NCBI Taxonomy" id="351746"/>
    <lineage>
        <taxon>Bacteria</taxon>
        <taxon>Pseudomonadati</taxon>
        <taxon>Pseudomonadota</taxon>
        <taxon>Gammaproteobacteria</taxon>
        <taxon>Pseudomonadales</taxon>
        <taxon>Pseudomonadaceae</taxon>
        <taxon>Pseudomonas</taxon>
    </lineage>
</organism>
<name>YBEY_PSEP1</name>
<protein>
    <recommendedName>
        <fullName evidence="1">Endoribonuclease YbeY</fullName>
        <ecNumber evidence="1">3.1.-.-</ecNumber>
    </recommendedName>
</protein>
<sequence length="157" mass="17750">MLELDIQRATDAATPEDAALRRWCELALRQRSADSEMTIRLVDEAEGRELNHTYRHKDYATNVLSFPADVPDELLDIPLLGDLVICVAVVEREAAEQGKSLEAHWAHLVIHGCLHLLGYDHIEDEEAEEMESLERELLAELGHPDPYADDETDSITH</sequence>
<keyword id="KW-0963">Cytoplasm</keyword>
<keyword id="KW-0255">Endonuclease</keyword>
<keyword id="KW-0378">Hydrolase</keyword>
<keyword id="KW-0479">Metal-binding</keyword>
<keyword id="KW-0540">Nuclease</keyword>
<keyword id="KW-0690">Ribosome biogenesis</keyword>
<keyword id="KW-0698">rRNA processing</keyword>
<keyword id="KW-0862">Zinc</keyword>
<dbReference type="EC" id="3.1.-.-" evidence="1"/>
<dbReference type="EMBL" id="CP000712">
    <property type="protein sequence ID" value="ABQ80784.1"/>
    <property type="molecule type" value="Genomic_DNA"/>
</dbReference>
<dbReference type="SMR" id="A5W9H4"/>
<dbReference type="KEGG" id="ppf:Pput_4664"/>
<dbReference type="eggNOG" id="COG0319">
    <property type="taxonomic scope" value="Bacteria"/>
</dbReference>
<dbReference type="HOGENOM" id="CLU_106710_0_1_6"/>
<dbReference type="GO" id="GO:0005737">
    <property type="term" value="C:cytoplasm"/>
    <property type="evidence" value="ECO:0007669"/>
    <property type="project" value="UniProtKB-SubCell"/>
</dbReference>
<dbReference type="GO" id="GO:0004222">
    <property type="term" value="F:metalloendopeptidase activity"/>
    <property type="evidence" value="ECO:0007669"/>
    <property type="project" value="InterPro"/>
</dbReference>
<dbReference type="GO" id="GO:0004521">
    <property type="term" value="F:RNA endonuclease activity"/>
    <property type="evidence" value="ECO:0007669"/>
    <property type="project" value="UniProtKB-UniRule"/>
</dbReference>
<dbReference type="GO" id="GO:0008270">
    <property type="term" value="F:zinc ion binding"/>
    <property type="evidence" value="ECO:0007669"/>
    <property type="project" value="UniProtKB-UniRule"/>
</dbReference>
<dbReference type="GO" id="GO:0006364">
    <property type="term" value="P:rRNA processing"/>
    <property type="evidence" value="ECO:0007669"/>
    <property type="project" value="UniProtKB-UniRule"/>
</dbReference>
<dbReference type="Gene3D" id="3.40.390.30">
    <property type="entry name" value="Metalloproteases ('zincins'), catalytic domain"/>
    <property type="match status" value="1"/>
</dbReference>
<dbReference type="HAMAP" id="MF_00009">
    <property type="entry name" value="Endoribonucl_YbeY"/>
    <property type="match status" value="1"/>
</dbReference>
<dbReference type="InterPro" id="IPR023091">
    <property type="entry name" value="MetalPrtase_cat_dom_sf_prd"/>
</dbReference>
<dbReference type="InterPro" id="IPR002036">
    <property type="entry name" value="YbeY"/>
</dbReference>
<dbReference type="InterPro" id="IPR020549">
    <property type="entry name" value="YbeY_CS"/>
</dbReference>
<dbReference type="NCBIfam" id="TIGR00043">
    <property type="entry name" value="rRNA maturation RNase YbeY"/>
    <property type="match status" value="1"/>
</dbReference>
<dbReference type="PANTHER" id="PTHR46986">
    <property type="entry name" value="ENDORIBONUCLEASE YBEY, CHLOROPLASTIC"/>
    <property type="match status" value="1"/>
</dbReference>
<dbReference type="PANTHER" id="PTHR46986:SF1">
    <property type="entry name" value="ENDORIBONUCLEASE YBEY, CHLOROPLASTIC"/>
    <property type="match status" value="1"/>
</dbReference>
<dbReference type="Pfam" id="PF02130">
    <property type="entry name" value="YbeY"/>
    <property type="match status" value="1"/>
</dbReference>
<dbReference type="SUPFAM" id="SSF55486">
    <property type="entry name" value="Metalloproteases ('zincins'), catalytic domain"/>
    <property type="match status" value="1"/>
</dbReference>
<dbReference type="PROSITE" id="PS01306">
    <property type="entry name" value="UPF0054"/>
    <property type="match status" value="1"/>
</dbReference>
<accession>A5W9H4</accession>
<reference key="1">
    <citation type="submission" date="2007-05" db="EMBL/GenBank/DDBJ databases">
        <title>Complete sequence of Pseudomonas putida F1.</title>
        <authorList>
            <consortium name="US DOE Joint Genome Institute"/>
            <person name="Copeland A."/>
            <person name="Lucas S."/>
            <person name="Lapidus A."/>
            <person name="Barry K."/>
            <person name="Detter J.C."/>
            <person name="Glavina del Rio T."/>
            <person name="Hammon N."/>
            <person name="Israni S."/>
            <person name="Dalin E."/>
            <person name="Tice H."/>
            <person name="Pitluck S."/>
            <person name="Chain P."/>
            <person name="Malfatti S."/>
            <person name="Shin M."/>
            <person name="Vergez L."/>
            <person name="Schmutz J."/>
            <person name="Larimer F."/>
            <person name="Land M."/>
            <person name="Hauser L."/>
            <person name="Kyrpides N."/>
            <person name="Lykidis A."/>
            <person name="Parales R."/>
            <person name="Richardson P."/>
        </authorList>
    </citation>
    <scope>NUCLEOTIDE SEQUENCE [LARGE SCALE GENOMIC DNA]</scope>
    <source>
        <strain>ATCC 700007 / DSM 6899 / JCM 31910 / BCRC 17059 / LMG 24140 / F1</strain>
    </source>
</reference>
<feature type="chain" id="PRO_1000057075" description="Endoribonuclease YbeY">
    <location>
        <begin position="1"/>
        <end position="157"/>
    </location>
</feature>
<feature type="region of interest" description="Disordered" evidence="2">
    <location>
        <begin position="136"/>
        <end position="157"/>
    </location>
</feature>
<feature type="compositionally biased region" description="Acidic residues" evidence="2">
    <location>
        <begin position="147"/>
        <end position="157"/>
    </location>
</feature>
<feature type="binding site" evidence="1">
    <location>
        <position position="111"/>
    </location>
    <ligand>
        <name>Zn(2+)</name>
        <dbReference type="ChEBI" id="CHEBI:29105"/>
        <note>catalytic</note>
    </ligand>
</feature>
<feature type="binding site" evidence="1">
    <location>
        <position position="115"/>
    </location>
    <ligand>
        <name>Zn(2+)</name>
        <dbReference type="ChEBI" id="CHEBI:29105"/>
        <note>catalytic</note>
    </ligand>
</feature>
<feature type="binding site" evidence="1">
    <location>
        <position position="121"/>
    </location>
    <ligand>
        <name>Zn(2+)</name>
        <dbReference type="ChEBI" id="CHEBI:29105"/>
        <note>catalytic</note>
    </ligand>
</feature>
<evidence type="ECO:0000255" key="1">
    <source>
        <dbReference type="HAMAP-Rule" id="MF_00009"/>
    </source>
</evidence>
<evidence type="ECO:0000256" key="2">
    <source>
        <dbReference type="SAM" id="MobiDB-lite"/>
    </source>
</evidence>
<proteinExistence type="inferred from homology"/>
<gene>
    <name evidence="1" type="primary">ybeY</name>
    <name type="ordered locus">Pput_4664</name>
</gene>
<comment type="function">
    <text evidence="1">Single strand-specific metallo-endoribonuclease involved in late-stage 70S ribosome quality control and in maturation of the 3' terminus of the 16S rRNA.</text>
</comment>
<comment type="cofactor">
    <cofactor evidence="1">
        <name>Zn(2+)</name>
        <dbReference type="ChEBI" id="CHEBI:29105"/>
    </cofactor>
    <text evidence="1">Binds 1 zinc ion.</text>
</comment>
<comment type="subcellular location">
    <subcellularLocation>
        <location evidence="1">Cytoplasm</location>
    </subcellularLocation>
</comment>
<comment type="similarity">
    <text evidence="1">Belongs to the endoribonuclease YbeY family.</text>
</comment>